<evidence type="ECO:0000250" key="1">
    <source>
        <dbReference type="UniProtKB" id="P49207"/>
    </source>
</evidence>
<evidence type="ECO:0000250" key="2">
    <source>
        <dbReference type="UniProtKB" id="Q9D1R9"/>
    </source>
</evidence>
<evidence type="ECO:0000269" key="3">
    <source>
    </source>
</evidence>
<evidence type="ECO:0000305" key="4"/>
<evidence type="ECO:0000312" key="5">
    <source>
        <dbReference type="Proteomes" id="UP000008227"/>
    </source>
</evidence>
<evidence type="ECO:0007744" key="6">
    <source>
        <dbReference type="PDB" id="3J7O"/>
    </source>
</evidence>
<evidence type="ECO:0007744" key="7">
    <source>
        <dbReference type="PDB" id="3J7P"/>
    </source>
</evidence>
<evidence type="ECO:0007744" key="8">
    <source>
        <dbReference type="PDB" id="3J7Q"/>
    </source>
</evidence>
<accession>Q29223</accession>
<accession>F2Z5B9</accession>
<name>RL34_PIG</name>
<keyword id="KW-0002">3D-structure</keyword>
<keyword id="KW-0007">Acetylation</keyword>
<keyword id="KW-0963">Cytoplasm</keyword>
<keyword id="KW-0256">Endoplasmic reticulum</keyword>
<keyword id="KW-1017">Isopeptide bond</keyword>
<keyword id="KW-0597">Phosphoprotein</keyword>
<keyword id="KW-1185">Reference proteome</keyword>
<keyword id="KW-0687">Ribonucleoprotein</keyword>
<keyword id="KW-0689">Ribosomal protein</keyword>
<keyword id="KW-0832">Ubl conjugation</keyword>
<sequence>MVQRLTYRRRLSYNTASNKTRLSRTPGNRIVYLYTKKVGKAPKSACGVCPGRLRGVRAVRPKVLMRLSKTKKHVSRAYGGSMCAKCVRDRIKRAFLIEEQKIVVKVLKAQAQSQKAK</sequence>
<dbReference type="EMBL" id="F14815">
    <property type="protein sequence ID" value="CAA23273.1"/>
    <property type="molecule type" value="mRNA"/>
</dbReference>
<dbReference type="EMBL" id="AEMK02000067">
    <property type="status" value="NOT_ANNOTATED_CDS"/>
    <property type="molecule type" value="Genomic_DNA"/>
</dbReference>
<dbReference type="RefSeq" id="XP_005666999.1">
    <property type="nucleotide sequence ID" value="XM_005666942.3"/>
</dbReference>
<dbReference type="RefSeq" id="XP_005667000.1">
    <property type="nucleotide sequence ID" value="XM_005666943.3"/>
</dbReference>
<dbReference type="RefSeq" id="XP_013834418.1">
    <property type="nucleotide sequence ID" value="XM_013978964.2"/>
</dbReference>
<dbReference type="RefSeq" id="XP_013834419.1">
    <property type="nucleotide sequence ID" value="XM_013978965.1"/>
</dbReference>
<dbReference type="PDB" id="3J7O">
    <property type="method" value="EM"/>
    <property type="resolution" value="3.50 A"/>
    <property type="chains" value="g=1-108"/>
</dbReference>
<dbReference type="PDB" id="3J7P">
    <property type="method" value="EM"/>
    <property type="resolution" value="3.50 A"/>
    <property type="chains" value="g=1-108"/>
</dbReference>
<dbReference type="PDB" id="3J7Q">
    <property type="method" value="EM"/>
    <property type="resolution" value="3.50 A"/>
    <property type="chains" value="g=1-108"/>
</dbReference>
<dbReference type="PDB" id="3J7R">
    <property type="method" value="EM"/>
    <property type="resolution" value="3.90 A"/>
    <property type="chains" value="g=1-108"/>
</dbReference>
<dbReference type="PDBsum" id="3J7O"/>
<dbReference type="PDBsum" id="3J7P"/>
<dbReference type="PDBsum" id="3J7Q"/>
<dbReference type="PDBsum" id="3J7R"/>
<dbReference type="SMR" id="Q29223"/>
<dbReference type="FunCoup" id="Q29223">
    <property type="interactions" value="1751"/>
</dbReference>
<dbReference type="STRING" id="9823.ENSSSCP00000009753"/>
<dbReference type="PaxDb" id="9823-ENSSSCP00000009753"/>
<dbReference type="PeptideAtlas" id="Q29223"/>
<dbReference type="Ensembl" id="ENSSSCT00000010015.5">
    <property type="protein sequence ID" value="ENSSSCP00000009753.2"/>
    <property type="gene ID" value="ENSSSCG00000009146.5"/>
</dbReference>
<dbReference type="Ensembl" id="ENSSSCT00015020909.1">
    <property type="protein sequence ID" value="ENSSSCP00015008217.1"/>
    <property type="gene ID" value="ENSSSCG00015015743.1"/>
</dbReference>
<dbReference type="Ensembl" id="ENSSSCT00025052002.1">
    <property type="protein sequence ID" value="ENSSSCP00025022182.1"/>
    <property type="gene ID" value="ENSSSCG00025038271.1"/>
</dbReference>
<dbReference type="Ensembl" id="ENSSSCT00030004938.1">
    <property type="protein sequence ID" value="ENSSSCP00030001962.1"/>
    <property type="gene ID" value="ENSSSCG00030003785.1"/>
</dbReference>
<dbReference type="Ensembl" id="ENSSSCT00035028324.1">
    <property type="protein sequence ID" value="ENSSSCP00035010908.1"/>
    <property type="gene ID" value="ENSSSCG00035021704.1"/>
</dbReference>
<dbReference type="Ensembl" id="ENSSSCT00040102900.1">
    <property type="protein sequence ID" value="ENSSSCP00040046537.1"/>
    <property type="gene ID" value="ENSSSCG00040074412.1"/>
</dbReference>
<dbReference type="Ensembl" id="ENSSSCT00045043043.1">
    <property type="protein sequence ID" value="ENSSSCP00045029899.1"/>
    <property type="gene ID" value="ENSSSCG00045025248.1"/>
</dbReference>
<dbReference type="Ensembl" id="ENSSSCT00050018619.1">
    <property type="protein sequence ID" value="ENSSSCP00050007687.1"/>
    <property type="gene ID" value="ENSSSCG00050013820.1"/>
</dbReference>
<dbReference type="Ensembl" id="ENSSSCT00055014043.1">
    <property type="protein sequence ID" value="ENSSSCP00055011044.1"/>
    <property type="gene ID" value="ENSSSCG00055007220.1"/>
</dbReference>
<dbReference type="Ensembl" id="ENSSSCT00060104990.1">
    <property type="protein sequence ID" value="ENSSSCP00060046067.1"/>
    <property type="gene ID" value="ENSSSCG00060076495.1"/>
</dbReference>
<dbReference type="Ensembl" id="ENSSSCT00065010348.1">
    <property type="protein sequence ID" value="ENSSSCP00065004309.1"/>
    <property type="gene ID" value="ENSSSCG00065007708.1"/>
</dbReference>
<dbReference type="Ensembl" id="ENSSSCT00070039451.1">
    <property type="protein sequence ID" value="ENSSSCP00070033045.1"/>
    <property type="gene ID" value="ENSSSCG00070019891.1"/>
</dbReference>
<dbReference type="Ensembl" id="ENSSSCT00070039457.1">
    <property type="protein sequence ID" value="ENSSSCP00070033051.1"/>
    <property type="gene ID" value="ENSSSCG00070019891.1"/>
</dbReference>
<dbReference type="Ensembl" id="ENSSSCT00085025786">
    <property type="protein sequence ID" value="ENSSSCP00085017913"/>
    <property type="gene ID" value="ENSSSCG00085013588"/>
</dbReference>
<dbReference type="Ensembl" id="ENSSSCT00090037166">
    <property type="protein sequence ID" value="ENSSSCP00090023129"/>
    <property type="gene ID" value="ENSSSCG00090020975"/>
</dbReference>
<dbReference type="Ensembl" id="ENSSSCT00105045850">
    <property type="protein sequence ID" value="ENSSSCP00105031881"/>
    <property type="gene ID" value="ENSSSCG00105024258"/>
</dbReference>
<dbReference type="Ensembl" id="ENSSSCT00110006448">
    <property type="protein sequence ID" value="ENSSSCP00110004702"/>
    <property type="gene ID" value="ENSSSCG00110003275"/>
</dbReference>
<dbReference type="Ensembl" id="ENSSSCT00115021700">
    <property type="protein sequence ID" value="ENSSSCP00115020547"/>
    <property type="gene ID" value="ENSSSCG00115012576"/>
</dbReference>
<dbReference type="Ensembl" id="ENSSSCT00130035904">
    <property type="protein sequence ID" value="ENSSSCP00130025118"/>
    <property type="gene ID" value="ENSSSCG00130018412"/>
</dbReference>
<dbReference type="GeneID" id="100517840"/>
<dbReference type="KEGG" id="ssc:100517840"/>
<dbReference type="CTD" id="6164"/>
<dbReference type="VGNC" id="VGNC:98957">
    <property type="gene designation" value="RPL34"/>
</dbReference>
<dbReference type="eggNOG" id="KOG1790">
    <property type="taxonomic scope" value="Eukaryota"/>
</dbReference>
<dbReference type="GeneTree" id="ENSGT00390000008294"/>
<dbReference type="InParanoid" id="Q29223"/>
<dbReference type="OMA" id="RCHKCVR"/>
<dbReference type="OrthoDB" id="277449at2759"/>
<dbReference type="TreeFam" id="TF314326"/>
<dbReference type="Reactome" id="R-SSC-156827">
    <property type="pathway name" value="L13a-mediated translational silencing of Ceruloplasmin expression"/>
</dbReference>
<dbReference type="Reactome" id="R-SSC-1799339">
    <property type="pathway name" value="SRP-dependent cotranslational protein targeting to membrane"/>
</dbReference>
<dbReference type="Reactome" id="R-SSC-6791226">
    <property type="pathway name" value="Major pathway of rRNA processing in the nucleolus and cytosol"/>
</dbReference>
<dbReference type="Reactome" id="R-SSC-72689">
    <property type="pathway name" value="Formation of a pool of free 40S subunits"/>
</dbReference>
<dbReference type="Reactome" id="R-SSC-72706">
    <property type="pathway name" value="GTP hydrolysis and joining of the 60S ribosomal subunit"/>
</dbReference>
<dbReference type="Reactome" id="R-SSC-975956">
    <property type="pathway name" value="Nonsense Mediated Decay (NMD) independent of the Exon Junction Complex (EJC)"/>
</dbReference>
<dbReference type="Reactome" id="R-SSC-975957">
    <property type="pathway name" value="Nonsense Mediated Decay (NMD) enhanced by the Exon Junction Complex (EJC)"/>
</dbReference>
<dbReference type="Proteomes" id="UP000008227">
    <property type="component" value="Chromosome 8"/>
</dbReference>
<dbReference type="Proteomes" id="UP000314985">
    <property type="component" value="Chromosome 8"/>
</dbReference>
<dbReference type="Proteomes" id="UP000694570">
    <property type="component" value="Unplaced"/>
</dbReference>
<dbReference type="Proteomes" id="UP000694571">
    <property type="component" value="Unplaced"/>
</dbReference>
<dbReference type="Proteomes" id="UP000694720">
    <property type="component" value="Unplaced"/>
</dbReference>
<dbReference type="Proteomes" id="UP000694722">
    <property type="component" value="Unplaced"/>
</dbReference>
<dbReference type="Proteomes" id="UP000694723">
    <property type="component" value="Unplaced"/>
</dbReference>
<dbReference type="Proteomes" id="UP000694724">
    <property type="component" value="Unplaced"/>
</dbReference>
<dbReference type="Proteomes" id="UP000694725">
    <property type="component" value="Unplaced"/>
</dbReference>
<dbReference type="Proteomes" id="UP000694726">
    <property type="component" value="Unplaced"/>
</dbReference>
<dbReference type="Proteomes" id="UP000694727">
    <property type="component" value="Unplaced"/>
</dbReference>
<dbReference type="Proteomes" id="UP000694728">
    <property type="component" value="Unplaced"/>
</dbReference>
<dbReference type="Bgee" id="ENSSSCG00000009146">
    <property type="expression patterns" value="Expressed in forelimb bud and 47 other cell types or tissues"/>
</dbReference>
<dbReference type="GO" id="GO:0022625">
    <property type="term" value="C:cytosolic large ribosomal subunit"/>
    <property type="evidence" value="ECO:0000318"/>
    <property type="project" value="GO_Central"/>
</dbReference>
<dbReference type="GO" id="GO:0005783">
    <property type="term" value="C:endoplasmic reticulum"/>
    <property type="evidence" value="ECO:0007669"/>
    <property type="project" value="UniProtKB-SubCell"/>
</dbReference>
<dbReference type="GO" id="GO:0003735">
    <property type="term" value="F:structural constituent of ribosome"/>
    <property type="evidence" value="ECO:0000318"/>
    <property type="project" value="GO_Central"/>
</dbReference>
<dbReference type="GO" id="GO:0006412">
    <property type="term" value="P:translation"/>
    <property type="evidence" value="ECO:0007669"/>
    <property type="project" value="InterPro"/>
</dbReference>
<dbReference type="Gene3D" id="6.20.340.10">
    <property type="match status" value="1"/>
</dbReference>
<dbReference type="Gene3D" id="6.20.370.70">
    <property type="match status" value="1"/>
</dbReference>
<dbReference type="InterPro" id="IPR008195">
    <property type="entry name" value="Ribosomal_eL34"/>
</dbReference>
<dbReference type="InterPro" id="IPR038562">
    <property type="entry name" value="Ribosomal_eL34_C_sf"/>
</dbReference>
<dbReference type="InterPro" id="IPR018065">
    <property type="entry name" value="Ribosomal_eL34_CS"/>
</dbReference>
<dbReference type="PANTHER" id="PTHR46595">
    <property type="entry name" value="60S RIBOSOMAL PROTEIN L34"/>
    <property type="match status" value="1"/>
</dbReference>
<dbReference type="Pfam" id="PF01199">
    <property type="entry name" value="Ribosomal_L34e"/>
    <property type="match status" value="1"/>
</dbReference>
<dbReference type="PRINTS" id="PR01250">
    <property type="entry name" value="RIBOSOMALL34"/>
</dbReference>
<dbReference type="PROSITE" id="PS01145">
    <property type="entry name" value="RIBOSOMAL_L34E"/>
    <property type="match status" value="1"/>
</dbReference>
<protein>
    <recommendedName>
        <fullName evidence="4">Large ribosomal subunit protein eL34</fullName>
    </recommendedName>
    <alternativeName>
        <fullName>60S ribosomal protein L34</fullName>
    </alternativeName>
</protein>
<gene>
    <name type="primary">RPL34</name>
</gene>
<reference key="1">
    <citation type="journal article" date="1996" name="Mamm. Genome">
        <title>Evaluation and characterization of a porcine small intestine cDNA library: analysis of 839 clones.</title>
        <authorList>
            <person name="Winteroe A.K."/>
            <person name="Fredholm M."/>
            <person name="Davies W."/>
        </authorList>
    </citation>
    <scope>NUCLEOTIDE SEQUENCE [LARGE SCALE MRNA]</scope>
    <source>
        <tissue>Small intestine</tissue>
    </source>
</reference>
<reference evidence="5" key="2">
    <citation type="submission" date="2009-11" db="EMBL/GenBank/DDBJ databases">
        <authorList>
            <consortium name="Porcine genome sequencing project"/>
        </authorList>
    </citation>
    <scope>NUCLEOTIDE SEQUENCE [LARGE SCALE GENOMIC DNA]</scope>
    <source>
        <strain>Duroc</strain>
    </source>
</reference>
<reference evidence="6 7 8" key="3">
    <citation type="journal article" date="2014" name="Cell">
        <title>Structure of the mammalian ribosome-Sec61 complex to 3.4 A resolution.</title>
        <authorList>
            <person name="Voorhees R.M."/>
            <person name="Fernandez I.S."/>
            <person name="Scheres S.H."/>
            <person name="Hegde R.S."/>
        </authorList>
    </citation>
    <scope>STRUCTURE BY ELECTRON MICROSCOPY (3.40 ANGSTROMS)</scope>
    <scope>FUNCTION</scope>
    <scope>SUBCELLULAR LOCATION</scope>
    <scope>SUBUNIT</scope>
</reference>
<proteinExistence type="evidence at protein level"/>
<feature type="chain" id="PRO_0000131833" description="Large ribosomal subunit protein eL34">
    <location>
        <begin position="1"/>
        <end position="117"/>
    </location>
</feature>
<feature type="modified residue" description="Phosphoserine" evidence="1">
    <location>
        <position position="12"/>
    </location>
</feature>
<feature type="modified residue" description="N6-acetyllysine" evidence="1">
    <location>
        <position position="36"/>
    </location>
</feature>
<feature type="modified residue" description="N6-acetyllysine" evidence="2">
    <location>
        <position position="43"/>
    </location>
</feature>
<feature type="cross-link" description="Glycyl lysine isopeptide (Lys-Gly) (interchain with G-Cter in SUMO2)" evidence="1">
    <location>
        <position position="108"/>
    </location>
</feature>
<feature type="sequence conflict" description="In Ref. 1; CAA23273." ref="1">
    <original>SRAYGGSMC</original>
    <variation>QPGLWWFHV</variation>
    <location>
        <begin position="75"/>
        <end position="83"/>
    </location>
</feature>
<organism>
    <name type="scientific">Sus scrofa</name>
    <name type="common">Pig</name>
    <dbReference type="NCBI Taxonomy" id="9823"/>
    <lineage>
        <taxon>Eukaryota</taxon>
        <taxon>Metazoa</taxon>
        <taxon>Chordata</taxon>
        <taxon>Craniata</taxon>
        <taxon>Vertebrata</taxon>
        <taxon>Euteleostomi</taxon>
        <taxon>Mammalia</taxon>
        <taxon>Eutheria</taxon>
        <taxon>Laurasiatheria</taxon>
        <taxon>Artiodactyla</taxon>
        <taxon>Suina</taxon>
        <taxon>Suidae</taxon>
        <taxon>Sus</taxon>
    </lineage>
</organism>
<comment type="function">
    <text evidence="3">Component of the large ribosomal subunit (PubMed:24930395). The ribosome is a large ribonucleoprotein complex responsible for the synthesis of proteins in the cell (PubMed:24930395).</text>
</comment>
<comment type="subunit">
    <text evidence="3">Component of the large ribosomal subunit.</text>
</comment>
<comment type="subcellular location">
    <subcellularLocation>
        <location evidence="1">Cytoplasm</location>
        <location evidence="1">Cytosol</location>
    </subcellularLocation>
    <subcellularLocation>
        <location evidence="1">Cytoplasm</location>
    </subcellularLocation>
    <subcellularLocation>
        <location evidence="3">Endoplasmic reticulum</location>
    </subcellularLocation>
    <text evidence="1 3">Detected on cytosolic polysomes (By similarity). Detected in ribosomes that are associated with the rough endoplasmic reticulum (PubMed:24930395).</text>
</comment>
<comment type="similarity">
    <text evidence="4">Belongs to the eukaryotic ribosomal protein eL34 family.</text>
</comment>